<evidence type="ECO:0000255" key="1">
    <source>
        <dbReference type="HAMAP-Rule" id="MF_00145"/>
    </source>
</evidence>
<accession>A4SH15</accession>
<organism>
    <name type="scientific">Chlorobium phaeovibrioides (strain DSM 265 / 1930)</name>
    <name type="common">Prosthecochloris vibrioformis (strain DSM 265)</name>
    <dbReference type="NCBI Taxonomy" id="290318"/>
    <lineage>
        <taxon>Bacteria</taxon>
        <taxon>Pseudomonadati</taxon>
        <taxon>Chlorobiota</taxon>
        <taxon>Chlorobiia</taxon>
        <taxon>Chlorobiales</taxon>
        <taxon>Chlorobiaceae</taxon>
        <taxon>Chlorobium/Pelodictyon group</taxon>
        <taxon>Chlorobium</taxon>
    </lineage>
</organism>
<name>PGK_CHLPM</name>
<comment type="catalytic activity">
    <reaction evidence="1">
        <text>(2R)-3-phosphoglycerate + ATP = (2R)-3-phospho-glyceroyl phosphate + ADP</text>
        <dbReference type="Rhea" id="RHEA:14801"/>
        <dbReference type="ChEBI" id="CHEBI:30616"/>
        <dbReference type="ChEBI" id="CHEBI:57604"/>
        <dbReference type="ChEBI" id="CHEBI:58272"/>
        <dbReference type="ChEBI" id="CHEBI:456216"/>
        <dbReference type="EC" id="2.7.2.3"/>
    </reaction>
</comment>
<comment type="pathway">
    <text evidence="1">Carbohydrate degradation; glycolysis; pyruvate from D-glyceraldehyde 3-phosphate: step 2/5.</text>
</comment>
<comment type="subunit">
    <text evidence="1">Monomer.</text>
</comment>
<comment type="subcellular location">
    <subcellularLocation>
        <location evidence="1">Cytoplasm</location>
    </subcellularLocation>
</comment>
<comment type="similarity">
    <text evidence="1">Belongs to the phosphoglycerate kinase family.</text>
</comment>
<proteinExistence type="inferred from homology"/>
<gene>
    <name evidence="1" type="primary">pgk</name>
    <name type="ordered locus">Cvib_1766</name>
</gene>
<sequence length="397" mass="42406">MQKKTLSDITIQGKRILMRVDFNVPLNDEREITDDKRIVEALPSIRKILDNGGRLILMSHLGRPKGKVNPIFSLAPVAAKLSELIDTPVAMAEDCIGTEVMQSALALQDGEVMLLENLRFHPEEEANDPEFAKELAALGEMYVNDAFGTAHRAHASTEGITHFVPTAVAGYLIEKELMYLGKALEKPERPFVAILGGSKISGKIDVLENLFKKVDTVLIGGAMVFTFFKAMGLETGSSLVEDNKLELALSLLEQAKNRNIKLLLPQDVIAAPELSADAPFHAVSVKELEAGEMGLDIGPLTIEAYRQEILGARTILWNGPMGVFEIDSFANGTFAVAEAMALATAKGATTIIGGGDSAAAVAKAGLASKMTHISTGGGASLEFLEGKELPGIAALND</sequence>
<protein>
    <recommendedName>
        <fullName evidence="1">Phosphoglycerate kinase</fullName>
        <ecNumber evidence="1">2.7.2.3</ecNumber>
    </recommendedName>
</protein>
<keyword id="KW-0067">ATP-binding</keyword>
<keyword id="KW-0963">Cytoplasm</keyword>
<keyword id="KW-0324">Glycolysis</keyword>
<keyword id="KW-0418">Kinase</keyword>
<keyword id="KW-0547">Nucleotide-binding</keyword>
<keyword id="KW-0808">Transferase</keyword>
<dbReference type="EC" id="2.7.2.3" evidence="1"/>
<dbReference type="EMBL" id="CP000607">
    <property type="protein sequence ID" value="ABP37774.1"/>
    <property type="molecule type" value="Genomic_DNA"/>
</dbReference>
<dbReference type="SMR" id="A4SH15"/>
<dbReference type="STRING" id="290318.Cvib_1766"/>
<dbReference type="KEGG" id="pvi:Cvib_1766"/>
<dbReference type="eggNOG" id="COG0126">
    <property type="taxonomic scope" value="Bacteria"/>
</dbReference>
<dbReference type="HOGENOM" id="CLU_025427_0_2_10"/>
<dbReference type="OrthoDB" id="9808460at2"/>
<dbReference type="UniPathway" id="UPA00109">
    <property type="reaction ID" value="UER00185"/>
</dbReference>
<dbReference type="GO" id="GO:0005829">
    <property type="term" value="C:cytosol"/>
    <property type="evidence" value="ECO:0007669"/>
    <property type="project" value="TreeGrafter"/>
</dbReference>
<dbReference type="GO" id="GO:0043531">
    <property type="term" value="F:ADP binding"/>
    <property type="evidence" value="ECO:0007669"/>
    <property type="project" value="TreeGrafter"/>
</dbReference>
<dbReference type="GO" id="GO:0005524">
    <property type="term" value="F:ATP binding"/>
    <property type="evidence" value="ECO:0007669"/>
    <property type="project" value="UniProtKB-KW"/>
</dbReference>
<dbReference type="GO" id="GO:0004618">
    <property type="term" value="F:phosphoglycerate kinase activity"/>
    <property type="evidence" value="ECO:0007669"/>
    <property type="project" value="UniProtKB-UniRule"/>
</dbReference>
<dbReference type="GO" id="GO:0006094">
    <property type="term" value="P:gluconeogenesis"/>
    <property type="evidence" value="ECO:0007669"/>
    <property type="project" value="TreeGrafter"/>
</dbReference>
<dbReference type="GO" id="GO:0006096">
    <property type="term" value="P:glycolytic process"/>
    <property type="evidence" value="ECO:0007669"/>
    <property type="project" value="UniProtKB-UniRule"/>
</dbReference>
<dbReference type="CDD" id="cd00318">
    <property type="entry name" value="Phosphoglycerate_kinase"/>
    <property type="match status" value="1"/>
</dbReference>
<dbReference type="FunFam" id="3.40.50.1260:FF:000003">
    <property type="entry name" value="Phosphoglycerate kinase"/>
    <property type="match status" value="1"/>
</dbReference>
<dbReference type="FunFam" id="3.40.50.1260:FF:000006">
    <property type="entry name" value="Phosphoglycerate kinase"/>
    <property type="match status" value="1"/>
</dbReference>
<dbReference type="Gene3D" id="3.40.50.1260">
    <property type="entry name" value="Phosphoglycerate kinase, N-terminal domain"/>
    <property type="match status" value="2"/>
</dbReference>
<dbReference type="HAMAP" id="MF_00145">
    <property type="entry name" value="Phosphoglyc_kinase"/>
    <property type="match status" value="1"/>
</dbReference>
<dbReference type="InterPro" id="IPR001576">
    <property type="entry name" value="Phosphoglycerate_kinase"/>
</dbReference>
<dbReference type="InterPro" id="IPR015824">
    <property type="entry name" value="Phosphoglycerate_kinase_N"/>
</dbReference>
<dbReference type="InterPro" id="IPR036043">
    <property type="entry name" value="Phosphoglycerate_kinase_sf"/>
</dbReference>
<dbReference type="PANTHER" id="PTHR11406">
    <property type="entry name" value="PHOSPHOGLYCERATE KINASE"/>
    <property type="match status" value="1"/>
</dbReference>
<dbReference type="PANTHER" id="PTHR11406:SF23">
    <property type="entry name" value="PHOSPHOGLYCERATE KINASE 1, CHLOROPLASTIC-RELATED"/>
    <property type="match status" value="1"/>
</dbReference>
<dbReference type="Pfam" id="PF00162">
    <property type="entry name" value="PGK"/>
    <property type="match status" value="1"/>
</dbReference>
<dbReference type="PIRSF" id="PIRSF000724">
    <property type="entry name" value="Pgk"/>
    <property type="match status" value="1"/>
</dbReference>
<dbReference type="PRINTS" id="PR00477">
    <property type="entry name" value="PHGLYCKINASE"/>
</dbReference>
<dbReference type="SUPFAM" id="SSF53748">
    <property type="entry name" value="Phosphoglycerate kinase"/>
    <property type="match status" value="1"/>
</dbReference>
<feature type="chain" id="PRO_1000076598" description="Phosphoglycerate kinase">
    <location>
        <begin position="1"/>
        <end position="397"/>
    </location>
</feature>
<feature type="binding site" evidence="1">
    <location>
        <begin position="21"/>
        <end position="23"/>
    </location>
    <ligand>
        <name>substrate</name>
    </ligand>
</feature>
<feature type="binding site" evidence="1">
    <location>
        <position position="37"/>
    </location>
    <ligand>
        <name>substrate</name>
    </ligand>
</feature>
<feature type="binding site" evidence="1">
    <location>
        <begin position="60"/>
        <end position="63"/>
    </location>
    <ligand>
        <name>substrate</name>
    </ligand>
</feature>
<feature type="binding site" evidence="1">
    <location>
        <position position="119"/>
    </location>
    <ligand>
        <name>substrate</name>
    </ligand>
</feature>
<feature type="binding site" evidence="1">
    <location>
        <position position="152"/>
    </location>
    <ligand>
        <name>substrate</name>
    </ligand>
</feature>
<feature type="binding site" evidence="1">
    <location>
        <position position="203"/>
    </location>
    <ligand>
        <name>ATP</name>
        <dbReference type="ChEBI" id="CHEBI:30616"/>
    </ligand>
</feature>
<feature type="binding site" evidence="1">
    <location>
        <position position="294"/>
    </location>
    <ligand>
        <name>ATP</name>
        <dbReference type="ChEBI" id="CHEBI:30616"/>
    </ligand>
</feature>
<feature type="binding site" evidence="1">
    <location>
        <position position="325"/>
    </location>
    <ligand>
        <name>ATP</name>
        <dbReference type="ChEBI" id="CHEBI:30616"/>
    </ligand>
</feature>
<feature type="binding site" evidence="1">
    <location>
        <begin position="354"/>
        <end position="357"/>
    </location>
    <ligand>
        <name>ATP</name>
        <dbReference type="ChEBI" id="CHEBI:30616"/>
    </ligand>
</feature>
<reference key="1">
    <citation type="submission" date="2007-03" db="EMBL/GenBank/DDBJ databases">
        <title>Complete sequence of Prosthecochloris vibrioformis DSM 265.</title>
        <authorList>
            <consortium name="US DOE Joint Genome Institute"/>
            <person name="Copeland A."/>
            <person name="Lucas S."/>
            <person name="Lapidus A."/>
            <person name="Barry K."/>
            <person name="Detter J.C."/>
            <person name="Glavina del Rio T."/>
            <person name="Hammon N."/>
            <person name="Israni S."/>
            <person name="Pitluck S."/>
            <person name="Schmutz J."/>
            <person name="Larimer F."/>
            <person name="Land M."/>
            <person name="Hauser L."/>
            <person name="Mikhailova N."/>
            <person name="Li T."/>
            <person name="Overmann J."/>
            <person name="Schuster S.C."/>
            <person name="Bryant D.A."/>
            <person name="Richardson P."/>
        </authorList>
    </citation>
    <scope>NUCLEOTIDE SEQUENCE [LARGE SCALE GENOMIC DNA]</scope>
    <source>
        <strain>DSM 265 / 1930</strain>
    </source>
</reference>